<feature type="initiator methionine" description="Removed" evidence="2">
    <location>
        <position position="1"/>
    </location>
</feature>
<feature type="chain" id="PRO_0000296951" description="Protein FAM136A">
    <location>
        <begin position="2"/>
        <end position="138"/>
    </location>
</feature>
<feature type="modified residue" description="N-acetylalanine" evidence="2">
    <location>
        <position position="2"/>
    </location>
</feature>
<feature type="modified residue" description="Phosphothreonine" evidence="1">
    <location>
        <position position="124"/>
    </location>
</feature>
<feature type="modified residue" description="Phosphothreonine" evidence="1">
    <location>
        <position position="126"/>
    </location>
</feature>
<gene>
    <name type="primary">Fam136a</name>
</gene>
<keyword id="KW-0007">Acetylation</keyword>
<keyword id="KW-0597">Phosphoprotein</keyword>
<keyword id="KW-1185">Reference proteome</keyword>
<name>F136A_MOUSE</name>
<evidence type="ECO:0000250" key="1">
    <source>
        <dbReference type="UniProtKB" id="B0BN94"/>
    </source>
</evidence>
<evidence type="ECO:0000250" key="2">
    <source>
        <dbReference type="UniProtKB" id="Q96C01"/>
    </source>
</evidence>
<evidence type="ECO:0000305" key="3"/>
<reference key="1">
    <citation type="journal article" date="2005" name="Science">
        <title>The transcriptional landscape of the mammalian genome.</title>
        <authorList>
            <person name="Carninci P."/>
            <person name="Kasukawa T."/>
            <person name="Katayama S."/>
            <person name="Gough J."/>
            <person name="Frith M.C."/>
            <person name="Maeda N."/>
            <person name="Oyama R."/>
            <person name="Ravasi T."/>
            <person name="Lenhard B."/>
            <person name="Wells C."/>
            <person name="Kodzius R."/>
            <person name="Shimokawa K."/>
            <person name="Bajic V.B."/>
            <person name="Brenner S.E."/>
            <person name="Batalov S."/>
            <person name="Forrest A.R."/>
            <person name="Zavolan M."/>
            <person name="Davis M.J."/>
            <person name="Wilming L.G."/>
            <person name="Aidinis V."/>
            <person name="Allen J.E."/>
            <person name="Ambesi-Impiombato A."/>
            <person name="Apweiler R."/>
            <person name="Aturaliya R.N."/>
            <person name="Bailey T.L."/>
            <person name="Bansal M."/>
            <person name="Baxter L."/>
            <person name="Beisel K.W."/>
            <person name="Bersano T."/>
            <person name="Bono H."/>
            <person name="Chalk A.M."/>
            <person name="Chiu K.P."/>
            <person name="Choudhary V."/>
            <person name="Christoffels A."/>
            <person name="Clutterbuck D.R."/>
            <person name="Crowe M.L."/>
            <person name="Dalla E."/>
            <person name="Dalrymple B.P."/>
            <person name="de Bono B."/>
            <person name="Della Gatta G."/>
            <person name="di Bernardo D."/>
            <person name="Down T."/>
            <person name="Engstrom P."/>
            <person name="Fagiolini M."/>
            <person name="Faulkner G."/>
            <person name="Fletcher C.F."/>
            <person name="Fukushima T."/>
            <person name="Furuno M."/>
            <person name="Futaki S."/>
            <person name="Gariboldi M."/>
            <person name="Georgii-Hemming P."/>
            <person name="Gingeras T.R."/>
            <person name="Gojobori T."/>
            <person name="Green R.E."/>
            <person name="Gustincich S."/>
            <person name="Harbers M."/>
            <person name="Hayashi Y."/>
            <person name="Hensch T.K."/>
            <person name="Hirokawa N."/>
            <person name="Hill D."/>
            <person name="Huminiecki L."/>
            <person name="Iacono M."/>
            <person name="Ikeo K."/>
            <person name="Iwama A."/>
            <person name="Ishikawa T."/>
            <person name="Jakt M."/>
            <person name="Kanapin A."/>
            <person name="Katoh M."/>
            <person name="Kawasawa Y."/>
            <person name="Kelso J."/>
            <person name="Kitamura H."/>
            <person name="Kitano H."/>
            <person name="Kollias G."/>
            <person name="Krishnan S.P."/>
            <person name="Kruger A."/>
            <person name="Kummerfeld S.K."/>
            <person name="Kurochkin I.V."/>
            <person name="Lareau L.F."/>
            <person name="Lazarevic D."/>
            <person name="Lipovich L."/>
            <person name="Liu J."/>
            <person name="Liuni S."/>
            <person name="McWilliam S."/>
            <person name="Madan Babu M."/>
            <person name="Madera M."/>
            <person name="Marchionni L."/>
            <person name="Matsuda H."/>
            <person name="Matsuzawa S."/>
            <person name="Miki H."/>
            <person name="Mignone F."/>
            <person name="Miyake S."/>
            <person name="Morris K."/>
            <person name="Mottagui-Tabar S."/>
            <person name="Mulder N."/>
            <person name="Nakano N."/>
            <person name="Nakauchi H."/>
            <person name="Ng P."/>
            <person name="Nilsson R."/>
            <person name="Nishiguchi S."/>
            <person name="Nishikawa S."/>
            <person name="Nori F."/>
            <person name="Ohara O."/>
            <person name="Okazaki Y."/>
            <person name="Orlando V."/>
            <person name="Pang K.C."/>
            <person name="Pavan W.J."/>
            <person name="Pavesi G."/>
            <person name="Pesole G."/>
            <person name="Petrovsky N."/>
            <person name="Piazza S."/>
            <person name="Reed J."/>
            <person name="Reid J.F."/>
            <person name="Ring B.Z."/>
            <person name="Ringwald M."/>
            <person name="Rost B."/>
            <person name="Ruan Y."/>
            <person name="Salzberg S.L."/>
            <person name="Sandelin A."/>
            <person name="Schneider C."/>
            <person name="Schoenbach C."/>
            <person name="Sekiguchi K."/>
            <person name="Semple C.A."/>
            <person name="Seno S."/>
            <person name="Sessa L."/>
            <person name="Sheng Y."/>
            <person name="Shibata Y."/>
            <person name="Shimada H."/>
            <person name="Shimada K."/>
            <person name="Silva D."/>
            <person name="Sinclair B."/>
            <person name="Sperling S."/>
            <person name="Stupka E."/>
            <person name="Sugiura K."/>
            <person name="Sultana R."/>
            <person name="Takenaka Y."/>
            <person name="Taki K."/>
            <person name="Tammoja K."/>
            <person name="Tan S.L."/>
            <person name="Tang S."/>
            <person name="Taylor M.S."/>
            <person name="Tegner J."/>
            <person name="Teichmann S.A."/>
            <person name="Ueda H.R."/>
            <person name="van Nimwegen E."/>
            <person name="Verardo R."/>
            <person name="Wei C.L."/>
            <person name="Yagi K."/>
            <person name="Yamanishi H."/>
            <person name="Zabarovsky E."/>
            <person name="Zhu S."/>
            <person name="Zimmer A."/>
            <person name="Hide W."/>
            <person name="Bult C."/>
            <person name="Grimmond S.M."/>
            <person name="Teasdale R.D."/>
            <person name="Liu E.T."/>
            <person name="Brusic V."/>
            <person name="Quackenbush J."/>
            <person name="Wahlestedt C."/>
            <person name="Mattick J.S."/>
            <person name="Hume D.A."/>
            <person name="Kai C."/>
            <person name="Sasaki D."/>
            <person name="Tomaru Y."/>
            <person name="Fukuda S."/>
            <person name="Kanamori-Katayama M."/>
            <person name="Suzuki M."/>
            <person name="Aoki J."/>
            <person name="Arakawa T."/>
            <person name="Iida J."/>
            <person name="Imamura K."/>
            <person name="Itoh M."/>
            <person name="Kato T."/>
            <person name="Kawaji H."/>
            <person name="Kawagashira N."/>
            <person name="Kawashima T."/>
            <person name="Kojima M."/>
            <person name="Kondo S."/>
            <person name="Konno H."/>
            <person name="Nakano K."/>
            <person name="Ninomiya N."/>
            <person name="Nishio T."/>
            <person name="Okada M."/>
            <person name="Plessy C."/>
            <person name="Shibata K."/>
            <person name="Shiraki T."/>
            <person name="Suzuki S."/>
            <person name="Tagami M."/>
            <person name="Waki K."/>
            <person name="Watahiki A."/>
            <person name="Okamura-Oho Y."/>
            <person name="Suzuki H."/>
            <person name="Kawai J."/>
            <person name="Hayashizaki Y."/>
        </authorList>
    </citation>
    <scope>NUCLEOTIDE SEQUENCE [LARGE SCALE MRNA]</scope>
    <source>
        <strain>C57BL/6J</strain>
        <tissue>Cerebellum</tissue>
        <tissue>Embryo</tissue>
        <tissue>Small intestine</tissue>
    </source>
</reference>
<reference key="2">
    <citation type="submission" date="2005-07" db="EMBL/GenBank/DDBJ databases">
        <title>Cloning of mouse full open reading frames in Gateway(R) system entry vector (pDONR201).</title>
        <authorList>
            <person name="Ebert L."/>
            <person name="Muenstermann E."/>
            <person name="Schatten R."/>
            <person name="Henze S."/>
            <person name="Bohn E."/>
            <person name="Mollenhauer J."/>
            <person name="Wiemann S."/>
            <person name="Schick M."/>
            <person name="Korn B."/>
        </authorList>
    </citation>
    <scope>NUCLEOTIDE SEQUENCE [LARGE SCALE MRNA]</scope>
</reference>
<reference key="3">
    <citation type="journal article" date="2004" name="Genome Res.">
        <title>The status, quality, and expansion of the NIH full-length cDNA project: the Mammalian Gene Collection (MGC).</title>
        <authorList>
            <consortium name="The MGC Project Team"/>
        </authorList>
    </citation>
    <scope>NUCLEOTIDE SEQUENCE [LARGE SCALE MRNA]</scope>
    <source>
        <strain>Czech II</strain>
        <strain>FVB/N</strain>
        <strain>FVB/N-3</strain>
        <tissue>Liver</tissue>
        <tissue>Mammary tumor</tissue>
    </source>
</reference>
<reference key="4">
    <citation type="journal article" date="2010" name="Cell">
        <title>A tissue-specific atlas of mouse protein phosphorylation and expression.</title>
        <authorList>
            <person name="Huttlin E.L."/>
            <person name="Jedrychowski M.P."/>
            <person name="Elias J.E."/>
            <person name="Goswami T."/>
            <person name="Rad R."/>
            <person name="Beausoleil S.A."/>
            <person name="Villen J."/>
            <person name="Haas W."/>
            <person name="Sowa M.E."/>
            <person name="Gygi S.P."/>
        </authorList>
    </citation>
    <scope>IDENTIFICATION BY MASS SPECTROMETRY [LARGE SCALE ANALYSIS]</scope>
    <source>
        <tissue>Brain</tissue>
        <tissue>Brown adipose tissue</tissue>
        <tissue>Kidney</tissue>
        <tissue>Liver</tissue>
        <tissue>Lung</tissue>
        <tissue>Testis</tissue>
    </source>
</reference>
<accession>Q9CR98</accession>
<accession>Q91YY1</accession>
<comment type="similarity">
    <text evidence="3">Belongs to the FAM136 family.</text>
</comment>
<organism>
    <name type="scientific">Mus musculus</name>
    <name type="common">Mouse</name>
    <dbReference type="NCBI Taxonomy" id="10090"/>
    <lineage>
        <taxon>Eukaryota</taxon>
        <taxon>Metazoa</taxon>
        <taxon>Chordata</taxon>
        <taxon>Craniata</taxon>
        <taxon>Vertebrata</taxon>
        <taxon>Euteleostomi</taxon>
        <taxon>Mammalia</taxon>
        <taxon>Eutheria</taxon>
        <taxon>Euarchontoglires</taxon>
        <taxon>Glires</taxon>
        <taxon>Rodentia</taxon>
        <taxon>Myomorpha</taxon>
        <taxon>Muroidea</taxon>
        <taxon>Muridae</taxon>
        <taxon>Murinae</taxon>
        <taxon>Mus</taxon>
        <taxon>Mus</taxon>
    </lineage>
</organism>
<proteinExistence type="evidence at protein level"/>
<sequence>MAEVQQLRVQEAVDAMVKSVERENIRKMQGLMFRCSANCCEDTQASMQQVHQCIERCHAPLAQAQALVTSELERFQDRLARCTMHCNDKAKDSMDAGTKELQVKRQLDSCVTKCVDDHMHLIPTMTKKMKESLSSIGK</sequence>
<protein>
    <recommendedName>
        <fullName>Protein FAM136A</fullName>
    </recommendedName>
</protein>
<dbReference type="EMBL" id="AK005280">
    <property type="protein sequence ID" value="BAB23928.1"/>
    <property type="molecule type" value="mRNA"/>
</dbReference>
<dbReference type="EMBL" id="AK008550">
    <property type="protein sequence ID" value="BAB25737.1"/>
    <property type="molecule type" value="mRNA"/>
</dbReference>
<dbReference type="EMBL" id="AK141279">
    <property type="protein sequence ID" value="BAE24632.1"/>
    <property type="molecule type" value="mRNA"/>
</dbReference>
<dbReference type="EMBL" id="CT010180">
    <property type="protein sequence ID" value="CAJ18388.1"/>
    <property type="molecule type" value="mRNA"/>
</dbReference>
<dbReference type="EMBL" id="BC013621">
    <property type="protein sequence ID" value="AAH13621.1"/>
    <property type="molecule type" value="mRNA"/>
</dbReference>
<dbReference type="EMBL" id="BC024049">
    <property type="protein sequence ID" value="AAH24049.1"/>
    <property type="molecule type" value="mRNA"/>
</dbReference>
<dbReference type="EMBL" id="BC103775">
    <property type="protein sequence ID" value="AAI03776.1"/>
    <property type="molecule type" value="mRNA"/>
</dbReference>
<dbReference type="CCDS" id="CCDS20309.1"/>
<dbReference type="RefSeq" id="NP_079867.1">
    <property type="nucleotide sequence ID" value="NM_025591.3"/>
</dbReference>
<dbReference type="SMR" id="Q9CR98"/>
<dbReference type="BioGRID" id="211510">
    <property type="interactions" value="3"/>
</dbReference>
<dbReference type="FunCoup" id="Q9CR98">
    <property type="interactions" value="3133"/>
</dbReference>
<dbReference type="STRING" id="10090.ENSMUSP00000071426"/>
<dbReference type="iPTMnet" id="Q9CR98"/>
<dbReference type="PhosphoSitePlus" id="Q9CR98"/>
<dbReference type="SwissPalm" id="Q9CR98"/>
<dbReference type="jPOST" id="Q9CR98"/>
<dbReference type="PaxDb" id="10090-ENSMUSP00000071426"/>
<dbReference type="PeptideAtlas" id="Q9CR98"/>
<dbReference type="ProteomicsDB" id="271520"/>
<dbReference type="Pumba" id="Q9CR98"/>
<dbReference type="Antibodypedia" id="31110">
    <property type="antibodies" value="43 antibodies from 11 providers"/>
</dbReference>
<dbReference type="DNASU" id="66488"/>
<dbReference type="Ensembl" id="ENSMUST00000071492.9">
    <property type="protein sequence ID" value="ENSMUSP00000071426.8"/>
    <property type="gene ID" value="ENSMUSG00000057497.9"/>
</dbReference>
<dbReference type="GeneID" id="66488"/>
<dbReference type="KEGG" id="mmu:66488"/>
<dbReference type="UCSC" id="uc009crl.1">
    <property type="organism name" value="mouse"/>
</dbReference>
<dbReference type="AGR" id="MGI:1913738"/>
<dbReference type="CTD" id="84908"/>
<dbReference type="MGI" id="MGI:1913738">
    <property type="gene designation" value="Fam136a"/>
</dbReference>
<dbReference type="VEuPathDB" id="HostDB:ENSMUSG00000057497"/>
<dbReference type="eggNOG" id="KOG3377">
    <property type="taxonomic scope" value="Eukaryota"/>
</dbReference>
<dbReference type="GeneTree" id="ENSGT00390000006707"/>
<dbReference type="HOGENOM" id="CLU_110442_3_0_1"/>
<dbReference type="InParanoid" id="Q9CR98"/>
<dbReference type="OMA" id="EMEGCVV"/>
<dbReference type="OrthoDB" id="9975421at2759"/>
<dbReference type="PhylomeDB" id="Q9CR98"/>
<dbReference type="TreeFam" id="TF315119"/>
<dbReference type="BioGRID-ORCS" id="66488">
    <property type="hits" value="6 hits in 77 CRISPR screens"/>
</dbReference>
<dbReference type="ChiTaRS" id="Fam136a">
    <property type="organism name" value="mouse"/>
</dbReference>
<dbReference type="PRO" id="PR:Q9CR98"/>
<dbReference type="Proteomes" id="UP000000589">
    <property type="component" value="Chromosome 6"/>
</dbReference>
<dbReference type="RNAct" id="Q9CR98">
    <property type="molecule type" value="protein"/>
</dbReference>
<dbReference type="Bgee" id="ENSMUSG00000057497">
    <property type="expression patterns" value="Expressed in primitive streak and 269 other cell types or tissues"/>
</dbReference>
<dbReference type="ExpressionAtlas" id="Q9CR98">
    <property type="expression patterns" value="baseline and differential"/>
</dbReference>
<dbReference type="GO" id="GO:0005739">
    <property type="term" value="C:mitochondrion"/>
    <property type="evidence" value="ECO:0007005"/>
    <property type="project" value="MGI"/>
</dbReference>
<dbReference type="InterPro" id="IPR008560">
    <property type="entry name" value="DUF842_euk"/>
</dbReference>
<dbReference type="PANTHER" id="PTHR21096">
    <property type="entry name" value="PROTEIN FAM136A"/>
    <property type="match status" value="1"/>
</dbReference>
<dbReference type="PANTHER" id="PTHR21096:SF0">
    <property type="entry name" value="PROTEIN FAM136A"/>
    <property type="match status" value="1"/>
</dbReference>
<dbReference type="Pfam" id="PF05811">
    <property type="entry name" value="DUF842"/>
    <property type="match status" value="1"/>
</dbReference>